<evidence type="ECO:0000255" key="1">
    <source>
        <dbReference type="HAMAP-Rule" id="MF_01242"/>
    </source>
</evidence>
<evidence type="ECO:0000255" key="2">
    <source>
        <dbReference type="PROSITE-ProRule" id="PRU00054"/>
    </source>
</evidence>
<protein>
    <recommendedName>
        <fullName evidence="1">Aliphatic amidase</fullName>
        <ecNumber evidence="1">3.5.1.4</ecNumber>
    </recommendedName>
    <alternativeName>
        <fullName evidence="1">Acylamide amidohydrolase</fullName>
    </alternativeName>
</protein>
<keyword id="KW-0378">Hydrolase</keyword>
<feature type="chain" id="PRO_1000214092" description="Aliphatic amidase">
    <location>
        <begin position="1"/>
        <end position="344"/>
    </location>
</feature>
<feature type="domain" description="CN hydrolase" evidence="2">
    <location>
        <begin position="13"/>
        <end position="260"/>
    </location>
</feature>
<feature type="active site" description="Proton acceptor" evidence="1">
    <location>
        <position position="59"/>
    </location>
</feature>
<feature type="active site" description="Proton donor" evidence="1">
    <location>
        <position position="134"/>
    </location>
</feature>
<feature type="active site" description="Nucleophile" evidence="1">
    <location>
        <position position="166"/>
    </location>
</feature>
<name>AMIE_VARPS</name>
<sequence>MRHGDISSSNDCVGVAVVNYKMPRLHTKAEVLDNARKIGEMLVGMKKGLPGMDLVIFPEYSTHGIMYDTKEMYDTASAIPGEETAIFADACRRANVWGVFSLTGERHEAHPDKAPYNTLILMNNQGEIVQKYRKIMPWVPIEGWYPGDCTYVSDGPKGMKMSLIICDDGNYPEIWRDCAMRGAELIIRCQGYMYPAKEQQILVSKAMAFMNNTYVAVANAAGFDGVYSYFGHSAIIGFDGRTLGECGEEEMGINYAELSMGLIRDARRNGQSQNHLFKLMHRGYTGVIHSGDGDKGVAACPFDFYKQWINDPEGAREQVESFTRSTIGTAECPIEGLPNEAARS</sequence>
<gene>
    <name evidence="1" type="primary">amiE</name>
    <name type="ordered locus">Vapar_0135</name>
</gene>
<dbReference type="EC" id="3.5.1.4" evidence="1"/>
<dbReference type="EMBL" id="CP001635">
    <property type="protein sequence ID" value="ACS16798.1"/>
    <property type="molecule type" value="Genomic_DNA"/>
</dbReference>
<dbReference type="SMR" id="C5CWZ4"/>
<dbReference type="STRING" id="543728.Vapar_0135"/>
<dbReference type="KEGG" id="vap:Vapar_0135"/>
<dbReference type="eggNOG" id="COG0388">
    <property type="taxonomic scope" value="Bacteria"/>
</dbReference>
<dbReference type="HOGENOM" id="CLU_071797_0_0_4"/>
<dbReference type="OrthoDB" id="9803803at2"/>
<dbReference type="GO" id="GO:0004040">
    <property type="term" value="F:amidase activity"/>
    <property type="evidence" value="ECO:0007669"/>
    <property type="project" value="UniProtKB-UniRule"/>
</dbReference>
<dbReference type="CDD" id="cd07565">
    <property type="entry name" value="aliphatic_amidase"/>
    <property type="match status" value="1"/>
</dbReference>
<dbReference type="Gene3D" id="3.60.110.10">
    <property type="entry name" value="Carbon-nitrogen hydrolase"/>
    <property type="match status" value="1"/>
</dbReference>
<dbReference type="HAMAP" id="MF_01242">
    <property type="entry name" value="Aliphatic_amidase"/>
    <property type="match status" value="1"/>
</dbReference>
<dbReference type="InterPro" id="IPR050345">
    <property type="entry name" value="Aliph_Amidase/BUP"/>
</dbReference>
<dbReference type="InterPro" id="IPR023719">
    <property type="entry name" value="Aliphatic_amidase"/>
</dbReference>
<dbReference type="InterPro" id="IPR003010">
    <property type="entry name" value="C-N_Hydrolase"/>
</dbReference>
<dbReference type="InterPro" id="IPR036526">
    <property type="entry name" value="C-N_Hydrolase_sf"/>
</dbReference>
<dbReference type="NCBIfam" id="NF009802">
    <property type="entry name" value="PRK13286.1"/>
    <property type="match status" value="1"/>
</dbReference>
<dbReference type="PANTHER" id="PTHR43674:SF14">
    <property type="entry name" value="ALIPHATIC AMIDASE"/>
    <property type="match status" value="1"/>
</dbReference>
<dbReference type="PANTHER" id="PTHR43674">
    <property type="entry name" value="NITRILASE C965.09-RELATED"/>
    <property type="match status" value="1"/>
</dbReference>
<dbReference type="Pfam" id="PF00795">
    <property type="entry name" value="CN_hydrolase"/>
    <property type="match status" value="1"/>
</dbReference>
<dbReference type="SUPFAM" id="SSF56317">
    <property type="entry name" value="Carbon-nitrogen hydrolase"/>
    <property type="match status" value="1"/>
</dbReference>
<dbReference type="PROSITE" id="PS50263">
    <property type="entry name" value="CN_HYDROLASE"/>
    <property type="match status" value="1"/>
</dbReference>
<proteinExistence type="inferred from homology"/>
<comment type="function">
    <text evidence="1">Catalyzes the hydrolysis of short-chain aliphatic amides to their corresponding organic acids with release of ammonia.</text>
</comment>
<comment type="function">
    <text evidence="1">Also exhibits in vitro acyl transferase activity, transferring the acyl moiety of short-chain amides to hydroxylamine to form hydroxamates.</text>
</comment>
<comment type="catalytic activity">
    <reaction evidence="1">
        <text>a monocarboxylic acid amide + H2O = a monocarboxylate + NH4(+)</text>
        <dbReference type="Rhea" id="RHEA:12020"/>
        <dbReference type="ChEBI" id="CHEBI:15377"/>
        <dbReference type="ChEBI" id="CHEBI:28938"/>
        <dbReference type="ChEBI" id="CHEBI:35757"/>
        <dbReference type="ChEBI" id="CHEBI:83628"/>
        <dbReference type="EC" id="3.5.1.4"/>
    </reaction>
</comment>
<comment type="similarity">
    <text evidence="1">Belongs to the carbon-nitrogen hydrolase superfamily. Aliphatic amidase family.</text>
</comment>
<accession>C5CWZ4</accession>
<organism>
    <name type="scientific">Variovorax paradoxus (strain S110)</name>
    <dbReference type="NCBI Taxonomy" id="543728"/>
    <lineage>
        <taxon>Bacteria</taxon>
        <taxon>Pseudomonadati</taxon>
        <taxon>Pseudomonadota</taxon>
        <taxon>Betaproteobacteria</taxon>
        <taxon>Burkholderiales</taxon>
        <taxon>Comamonadaceae</taxon>
        <taxon>Variovorax</taxon>
    </lineage>
</organism>
<reference key="1">
    <citation type="journal article" date="2011" name="J. Bacteriol.">
        <title>Complete genome sequence of the metabolically versatile plant growth-promoting endophyte, Variovorax paradoxus S110.</title>
        <authorList>
            <person name="Han J.I."/>
            <person name="Choi H.K."/>
            <person name="Lee S.W."/>
            <person name="Orwin P.M."/>
            <person name="Kim J."/>
            <person name="Laroe S.L."/>
            <person name="Kim T.G."/>
            <person name="O'Neil J."/>
            <person name="Leadbetter J.R."/>
            <person name="Lee S.Y."/>
            <person name="Hur C.G."/>
            <person name="Spain J.C."/>
            <person name="Ovchinnikova G."/>
            <person name="Goodwin L."/>
            <person name="Han C."/>
        </authorList>
    </citation>
    <scope>NUCLEOTIDE SEQUENCE [LARGE SCALE GENOMIC DNA]</scope>
    <source>
        <strain>S110</strain>
    </source>
</reference>